<dbReference type="EC" id="2.1.2.9" evidence="1"/>
<dbReference type="EMBL" id="AP009493">
    <property type="protein sequence ID" value="BAG22890.1"/>
    <property type="molecule type" value="Genomic_DNA"/>
</dbReference>
<dbReference type="RefSeq" id="WP_012381687.1">
    <property type="nucleotide sequence ID" value="NC_010572.1"/>
</dbReference>
<dbReference type="SMR" id="B1W473"/>
<dbReference type="KEGG" id="sgr:SGR_6061"/>
<dbReference type="PATRIC" id="fig|455632.4.peg.6213"/>
<dbReference type="eggNOG" id="COG0223">
    <property type="taxonomic scope" value="Bacteria"/>
</dbReference>
<dbReference type="HOGENOM" id="CLU_033347_1_0_11"/>
<dbReference type="Proteomes" id="UP000001685">
    <property type="component" value="Chromosome"/>
</dbReference>
<dbReference type="GO" id="GO:0005829">
    <property type="term" value="C:cytosol"/>
    <property type="evidence" value="ECO:0007669"/>
    <property type="project" value="TreeGrafter"/>
</dbReference>
<dbReference type="GO" id="GO:0004479">
    <property type="term" value="F:methionyl-tRNA formyltransferase activity"/>
    <property type="evidence" value="ECO:0007669"/>
    <property type="project" value="UniProtKB-UniRule"/>
</dbReference>
<dbReference type="CDD" id="cd08646">
    <property type="entry name" value="FMT_core_Met-tRNA-FMT_N"/>
    <property type="match status" value="1"/>
</dbReference>
<dbReference type="CDD" id="cd08704">
    <property type="entry name" value="Met_tRNA_FMT_C"/>
    <property type="match status" value="1"/>
</dbReference>
<dbReference type="FunFam" id="3.40.50.12230:FF:000001">
    <property type="entry name" value="Methionyl-tRNA formyltransferase"/>
    <property type="match status" value="1"/>
</dbReference>
<dbReference type="Gene3D" id="3.40.50.12230">
    <property type="match status" value="1"/>
</dbReference>
<dbReference type="HAMAP" id="MF_00182">
    <property type="entry name" value="Formyl_trans"/>
    <property type="match status" value="1"/>
</dbReference>
<dbReference type="InterPro" id="IPR005794">
    <property type="entry name" value="Fmt"/>
</dbReference>
<dbReference type="InterPro" id="IPR005793">
    <property type="entry name" value="Formyl_trans_C"/>
</dbReference>
<dbReference type="InterPro" id="IPR002376">
    <property type="entry name" value="Formyl_transf_N"/>
</dbReference>
<dbReference type="InterPro" id="IPR036477">
    <property type="entry name" value="Formyl_transf_N_sf"/>
</dbReference>
<dbReference type="InterPro" id="IPR011034">
    <property type="entry name" value="Formyl_transferase-like_C_sf"/>
</dbReference>
<dbReference type="InterPro" id="IPR044135">
    <property type="entry name" value="Met-tRNA-FMT_C"/>
</dbReference>
<dbReference type="InterPro" id="IPR041711">
    <property type="entry name" value="Met-tRNA-FMT_N"/>
</dbReference>
<dbReference type="NCBIfam" id="TIGR00460">
    <property type="entry name" value="fmt"/>
    <property type="match status" value="1"/>
</dbReference>
<dbReference type="PANTHER" id="PTHR11138">
    <property type="entry name" value="METHIONYL-TRNA FORMYLTRANSFERASE"/>
    <property type="match status" value="1"/>
</dbReference>
<dbReference type="PANTHER" id="PTHR11138:SF5">
    <property type="entry name" value="METHIONYL-TRNA FORMYLTRANSFERASE, MITOCHONDRIAL"/>
    <property type="match status" value="1"/>
</dbReference>
<dbReference type="Pfam" id="PF02911">
    <property type="entry name" value="Formyl_trans_C"/>
    <property type="match status" value="1"/>
</dbReference>
<dbReference type="Pfam" id="PF00551">
    <property type="entry name" value="Formyl_trans_N"/>
    <property type="match status" value="1"/>
</dbReference>
<dbReference type="SUPFAM" id="SSF50486">
    <property type="entry name" value="FMT C-terminal domain-like"/>
    <property type="match status" value="1"/>
</dbReference>
<dbReference type="SUPFAM" id="SSF53328">
    <property type="entry name" value="Formyltransferase"/>
    <property type="match status" value="1"/>
</dbReference>
<protein>
    <recommendedName>
        <fullName evidence="1">Methionyl-tRNA formyltransferase</fullName>
        <ecNumber evidence="1">2.1.2.9</ecNumber>
    </recommendedName>
</protein>
<name>FMT_STRGG</name>
<keyword id="KW-0648">Protein biosynthesis</keyword>
<keyword id="KW-0808">Transferase</keyword>
<reference key="1">
    <citation type="journal article" date="2008" name="J. Bacteriol.">
        <title>Genome sequence of the streptomycin-producing microorganism Streptomyces griseus IFO 13350.</title>
        <authorList>
            <person name="Ohnishi Y."/>
            <person name="Ishikawa J."/>
            <person name="Hara H."/>
            <person name="Suzuki H."/>
            <person name="Ikenoya M."/>
            <person name="Ikeda H."/>
            <person name="Yamashita A."/>
            <person name="Hattori M."/>
            <person name="Horinouchi S."/>
        </authorList>
    </citation>
    <scope>NUCLEOTIDE SEQUENCE [LARGE SCALE GENOMIC DNA]</scope>
    <source>
        <strain>JCM 4626 / CBS 651.72 / NBRC 13350 / KCC S-0626 / ISP 5235</strain>
    </source>
</reference>
<organism>
    <name type="scientific">Streptomyces griseus subsp. griseus (strain JCM 4626 / CBS 651.72 / NBRC 13350 / KCC S-0626 / ISP 5235)</name>
    <dbReference type="NCBI Taxonomy" id="455632"/>
    <lineage>
        <taxon>Bacteria</taxon>
        <taxon>Bacillati</taxon>
        <taxon>Actinomycetota</taxon>
        <taxon>Actinomycetes</taxon>
        <taxon>Kitasatosporales</taxon>
        <taxon>Streptomycetaceae</taxon>
        <taxon>Streptomyces</taxon>
    </lineage>
</organism>
<comment type="function">
    <text evidence="1">Attaches a formyl group to the free amino group of methionyl-tRNA(fMet). The formyl group appears to play a dual role in the initiator identity of N-formylmethionyl-tRNA by promoting its recognition by IF2 and preventing the misappropriation of this tRNA by the elongation apparatus.</text>
</comment>
<comment type="catalytic activity">
    <reaction evidence="1">
        <text>L-methionyl-tRNA(fMet) + (6R)-10-formyltetrahydrofolate = N-formyl-L-methionyl-tRNA(fMet) + (6S)-5,6,7,8-tetrahydrofolate + H(+)</text>
        <dbReference type="Rhea" id="RHEA:24380"/>
        <dbReference type="Rhea" id="RHEA-COMP:9952"/>
        <dbReference type="Rhea" id="RHEA-COMP:9953"/>
        <dbReference type="ChEBI" id="CHEBI:15378"/>
        <dbReference type="ChEBI" id="CHEBI:57453"/>
        <dbReference type="ChEBI" id="CHEBI:78530"/>
        <dbReference type="ChEBI" id="CHEBI:78844"/>
        <dbReference type="ChEBI" id="CHEBI:195366"/>
        <dbReference type="EC" id="2.1.2.9"/>
    </reaction>
</comment>
<comment type="similarity">
    <text evidence="1">Belongs to the Fmt family.</text>
</comment>
<gene>
    <name evidence="1" type="primary">fmt</name>
    <name type="ordered locus">SGR_6061</name>
</gene>
<evidence type="ECO:0000255" key="1">
    <source>
        <dbReference type="HAMAP-Rule" id="MF_00182"/>
    </source>
</evidence>
<accession>B1W473</accession>
<proteinExistence type="inferred from homology"/>
<feature type="chain" id="PRO_1000098445" description="Methionyl-tRNA formyltransferase">
    <location>
        <begin position="1"/>
        <end position="310"/>
    </location>
</feature>
<feature type="binding site" evidence="1">
    <location>
        <begin position="110"/>
        <end position="113"/>
    </location>
    <ligand>
        <name>(6S)-5,6,7,8-tetrahydrofolate</name>
        <dbReference type="ChEBI" id="CHEBI:57453"/>
    </ligand>
</feature>
<sequence>MKLVFAGTPEVAVPALDALIASDRHEVAAVVTRPDAPAGRGRRLVASPVAERAQEAGIEVLKPAKPRDEEFLARLREIAPDCCPVVAYGALLPKVALDVPARGWVNLHFSLLPAWRGAAPVQHAVMAGDEVTGASTFLIEEGLDSGPVYGVLTEEVRPTDTSGDLLTRLAFAGAGLLAATMDGIEDGTLHAVPQPHEGVTLAPKITVEDAQVQWSAPALRVDRVVRGCTPAPGAWTVFRGERLKLIQATPVLDRTDLAPGELSAAKNNVYVGTGSHAVELLWVQPQGKKPMRGADWARGVRIAHGELLGP</sequence>